<protein>
    <recommendedName>
        <fullName evidence="2">Tigerinin-2O</fullName>
    </recommendedName>
</protein>
<evidence type="ECO:0000269" key="1">
    <source>
    </source>
</evidence>
<evidence type="ECO:0000303" key="2">
    <source>
    </source>
</evidence>
<evidence type="ECO:0000305" key="3"/>
<evidence type="ECO:0000305" key="4">
    <source>
    </source>
</evidence>
<accession>C0HL42</accession>
<feature type="peptide" id="PRO_0000442176" description="Tigerinin-2O" evidence="1">
    <location>
        <begin position="1"/>
        <end position="11"/>
    </location>
</feature>
<feature type="disulfide bond" evidence="1">
    <location>
        <begin position="3"/>
        <end position="11"/>
    </location>
</feature>
<keyword id="KW-0878">Amphibian defense peptide</keyword>
<keyword id="KW-0903">Direct protein sequencing</keyword>
<keyword id="KW-1015">Disulfide bond</keyword>
<keyword id="KW-0964">Secreted</keyword>
<name>TIN2O_HOPOC</name>
<dbReference type="GO" id="GO:0005576">
    <property type="term" value="C:extracellular region"/>
    <property type="evidence" value="ECO:0007669"/>
    <property type="project" value="UniProtKB-SubCell"/>
</dbReference>
<dbReference type="GO" id="GO:0006952">
    <property type="term" value="P:defense response"/>
    <property type="evidence" value="ECO:0007669"/>
    <property type="project" value="UniProtKB-KW"/>
</dbReference>
<sequence>RTCIPIPLVMC</sequence>
<reference evidence="3" key="1">
    <citation type="journal article" date="2016" name="J. Nat. Prod.">
        <title>Purification, Conformational Analysis, and Properties of a Family of Tigerinin Peptides from Skin Secretions of the Crowned Bullfrog Hoplobatrachus occipitalis.</title>
        <authorList>
            <person name="McLaughlin C.M."/>
            <person name="Lampis S."/>
            <person name="Mechkarska M."/>
            <person name="Coquet L."/>
            <person name="Jouenne T."/>
            <person name="King J.D."/>
            <person name="Mangoni M.L."/>
            <person name="Lukic M.L."/>
            <person name="Scorciapino M.A."/>
            <person name="Conlon J.M."/>
        </authorList>
    </citation>
    <scope>PROTEIN SEQUENCE</scope>
    <scope>FUNCTION</scope>
    <scope>SUBCELLULAR LOCATION</scope>
    <scope>MASS SPECTROMETRY</scope>
    <scope>STRUCTURE BY NMR OF 1-11</scope>
    <scope>DISULFIDE BOND</scope>
    <source>
        <tissue evidence="2">Skin secretion</tissue>
    </source>
</reference>
<organism evidence="2">
    <name type="scientific">Hoplobatrachus occipitalis</name>
    <name type="common">African groove-crowned bullfrog</name>
    <name type="synonym">Rana occipitalis</name>
    <dbReference type="NCBI Taxonomy" id="127645"/>
    <lineage>
        <taxon>Eukaryota</taxon>
        <taxon>Metazoa</taxon>
        <taxon>Chordata</taxon>
        <taxon>Craniata</taxon>
        <taxon>Vertebrata</taxon>
        <taxon>Euteleostomi</taxon>
        <taxon>Amphibia</taxon>
        <taxon>Batrachia</taxon>
        <taxon>Anura</taxon>
        <taxon>Neobatrachia</taxon>
        <taxon>Ranoidea</taxon>
        <taxon>Dicroglossidae</taxon>
        <taxon>Dicroglossinae</taxon>
        <taxon>Hoplobatrachus</taxon>
    </lineage>
</organism>
<comment type="function">
    <text evidence="1">Stimulates insulin release from beta cells at a concentration of 100 nM and release of glucagon-like peptide 1 (GLP-1) from enteroendocrine cells at a concentration of 100 nM in vitro. Reduces secretion of interferon gamma from peritoneal cells in a mouse model. Has no inhibitory activity against Gram-positive bacterium B.megaterium Bm11 or Gram-negative bacterium E.coli ATCC 25922 at concentrations of up to 100uM. Has no hemolytic activity against mouse erythrocytes.</text>
</comment>
<comment type="subcellular location">
    <subcellularLocation>
        <location evidence="1">Secreted</location>
    </subcellularLocation>
</comment>
<comment type="tissue specificity">
    <text evidence="4">Expressed by the skin glands.</text>
</comment>
<comment type="mass spectrometry"/>
<proteinExistence type="evidence at protein level"/>